<protein>
    <recommendedName>
        <fullName evidence="1">tRNA dimethylallyltransferase</fullName>
        <ecNumber evidence="1">2.5.1.75</ecNumber>
    </recommendedName>
    <alternativeName>
        <fullName evidence="1">Dimethylallyl diphosphate:tRNA dimethylallyltransferase</fullName>
        <shortName evidence="1">DMAPP:tRNA dimethylallyltransferase</shortName>
        <shortName evidence="1">DMATase</shortName>
    </alternativeName>
    <alternativeName>
        <fullName evidence="1">Isopentenyl-diphosphate:tRNA isopentenyltransferase</fullName>
        <shortName evidence="1">IPP transferase</shortName>
        <shortName evidence="1">IPPT</shortName>
        <shortName evidence="1">IPTase</shortName>
    </alternativeName>
</protein>
<sequence length="313" mass="34876">MIETEMTPRPPAIFIMGPTASGKTALAIALRERLPVELISVDSALIYRGMDIGTAKPSAEELAQAPHRLIDIRDPAEAYSAADFRADALKEMAAITAAGRIPLLVGGTMLYFKALLEGLSPLPPADPAVRERIEQQAAEQGWDVLHRQLQEIDPVAALRIHPNDPQRLSRALEVFFISGKTLTELTKISGESLPYHVHQFAIAPTSRELIHQRIELRYHQMLAAGFETEARALFARGDLHTDLPSIRCVGYRQMWSYLSGEISYDEMVYRGICATRQLAKRQMTWLRGWDSVHWLDSEKPGEALDSVIQVVSA</sequence>
<evidence type="ECO:0000255" key="1">
    <source>
        <dbReference type="HAMAP-Rule" id="MF_00185"/>
    </source>
</evidence>
<feature type="chain" id="PRO_1000058440" description="tRNA dimethylallyltransferase">
    <location>
        <begin position="1"/>
        <end position="313"/>
    </location>
</feature>
<feature type="region of interest" description="Interaction with substrate tRNA" evidence="1">
    <location>
        <begin position="42"/>
        <end position="45"/>
    </location>
</feature>
<feature type="region of interest" description="Interaction with substrate tRNA" evidence="1">
    <location>
        <begin position="166"/>
        <end position="170"/>
    </location>
</feature>
<feature type="region of interest" description="Interaction with substrate tRNA" evidence="1">
    <location>
        <begin position="247"/>
        <end position="252"/>
    </location>
</feature>
<feature type="binding site" evidence="1">
    <location>
        <begin position="17"/>
        <end position="24"/>
    </location>
    <ligand>
        <name>ATP</name>
        <dbReference type="ChEBI" id="CHEBI:30616"/>
    </ligand>
</feature>
<feature type="binding site" evidence="1">
    <location>
        <begin position="19"/>
        <end position="24"/>
    </location>
    <ligand>
        <name>substrate</name>
    </ligand>
</feature>
<feature type="site" description="Interaction with substrate tRNA" evidence="1">
    <location>
        <position position="108"/>
    </location>
</feature>
<feature type="site" description="Interaction with substrate tRNA" evidence="1">
    <location>
        <position position="130"/>
    </location>
</feature>
<dbReference type="EC" id="2.5.1.75" evidence="1"/>
<dbReference type="EMBL" id="CP000826">
    <property type="protein sequence ID" value="ABV39538.1"/>
    <property type="molecule type" value="Genomic_DNA"/>
</dbReference>
<dbReference type="SMR" id="A8G8U8"/>
<dbReference type="STRING" id="399741.Spro_0430"/>
<dbReference type="KEGG" id="spe:Spro_0430"/>
<dbReference type="eggNOG" id="COG0324">
    <property type="taxonomic scope" value="Bacteria"/>
</dbReference>
<dbReference type="HOGENOM" id="CLU_032616_0_0_6"/>
<dbReference type="OrthoDB" id="9776390at2"/>
<dbReference type="GO" id="GO:0005524">
    <property type="term" value="F:ATP binding"/>
    <property type="evidence" value="ECO:0007669"/>
    <property type="project" value="UniProtKB-UniRule"/>
</dbReference>
<dbReference type="GO" id="GO:0052381">
    <property type="term" value="F:tRNA dimethylallyltransferase activity"/>
    <property type="evidence" value="ECO:0007669"/>
    <property type="project" value="UniProtKB-UniRule"/>
</dbReference>
<dbReference type="GO" id="GO:0006400">
    <property type="term" value="P:tRNA modification"/>
    <property type="evidence" value="ECO:0007669"/>
    <property type="project" value="TreeGrafter"/>
</dbReference>
<dbReference type="FunFam" id="1.10.20.140:FF:000001">
    <property type="entry name" value="tRNA dimethylallyltransferase"/>
    <property type="match status" value="1"/>
</dbReference>
<dbReference type="Gene3D" id="1.10.20.140">
    <property type="match status" value="1"/>
</dbReference>
<dbReference type="Gene3D" id="1.10.287.890">
    <property type="entry name" value="Crystal structure of tRNA isopentenylpyrophosphate transferase (bh2366) domain"/>
    <property type="match status" value="1"/>
</dbReference>
<dbReference type="Gene3D" id="3.40.50.300">
    <property type="entry name" value="P-loop containing nucleotide triphosphate hydrolases"/>
    <property type="match status" value="1"/>
</dbReference>
<dbReference type="HAMAP" id="MF_00185">
    <property type="entry name" value="IPP_trans"/>
    <property type="match status" value="1"/>
</dbReference>
<dbReference type="InterPro" id="IPR039657">
    <property type="entry name" value="Dimethylallyltransferase"/>
</dbReference>
<dbReference type="InterPro" id="IPR018022">
    <property type="entry name" value="IPT"/>
</dbReference>
<dbReference type="InterPro" id="IPR027417">
    <property type="entry name" value="P-loop_NTPase"/>
</dbReference>
<dbReference type="NCBIfam" id="TIGR00174">
    <property type="entry name" value="miaA"/>
    <property type="match status" value="1"/>
</dbReference>
<dbReference type="PANTHER" id="PTHR11088">
    <property type="entry name" value="TRNA DIMETHYLALLYLTRANSFERASE"/>
    <property type="match status" value="1"/>
</dbReference>
<dbReference type="PANTHER" id="PTHR11088:SF60">
    <property type="entry name" value="TRNA DIMETHYLALLYLTRANSFERASE"/>
    <property type="match status" value="1"/>
</dbReference>
<dbReference type="Pfam" id="PF01715">
    <property type="entry name" value="IPPT"/>
    <property type="match status" value="1"/>
</dbReference>
<dbReference type="SUPFAM" id="SSF52540">
    <property type="entry name" value="P-loop containing nucleoside triphosphate hydrolases"/>
    <property type="match status" value="1"/>
</dbReference>
<proteinExistence type="inferred from homology"/>
<gene>
    <name evidence="1" type="primary">miaA</name>
    <name type="ordered locus">Spro_0430</name>
</gene>
<reference key="1">
    <citation type="submission" date="2007-09" db="EMBL/GenBank/DDBJ databases">
        <title>Complete sequence of chromosome of Serratia proteamaculans 568.</title>
        <authorList>
            <consortium name="US DOE Joint Genome Institute"/>
            <person name="Copeland A."/>
            <person name="Lucas S."/>
            <person name="Lapidus A."/>
            <person name="Barry K."/>
            <person name="Glavina del Rio T."/>
            <person name="Dalin E."/>
            <person name="Tice H."/>
            <person name="Pitluck S."/>
            <person name="Chain P."/>
            <person name="Malfatti S."/>
            <person name="Shin M."/>
            <person name="Vergez L."/>
            <person name="Schmutz J."/>
            <person name="Larimer F."/>
            <person name="Land M."/>
            <person name="Hauser L."/>
            <person name="Kyrpides N."/>
            <person name="Kim E."/>
            <person name="Taghavi S."/>
            <person name="Newman L."/>
            <person name="Vangronsveld J."/>
            <person name="van der Lelie D."/>
            <person name="Richardson P."/>
        </authorList>
    </citation>
    <scope>NUCLEOTIDE SEQUENCE [LARGE SCALE GENOMIC DNA]</scope>
    <source>
        <strain>568</strain>
    </source>
</reference>
<comment type="function">
    <text evidence="1">Catalyzes the transfer of a dimethylallyl group onto the adenine at position 37 in tRNAs that read codons beginning with uridine, leading to the formation of N6-(dimethylallyl)adenosine (i(6)A).</text>
</comment>
<comment type="catalytic activity">
    <reaction evidence="1">
        <text>adenosine(37) in tRNA + dimethylallyl diphosphate = N(6)-dimethylallyladenosine(37) in tRNA + diphosphate</text>
        <dbReference type="Rhea" id="RHEA:26482"/>
        <dbReference type="Rhea" id="RHEA-COMP:10162"/>
        <dbReference type="Rhea" id="RHEA-COMP:10375"/>
        <dbReference type="ChEBI" id="CHEBI:33019"/>
        <dbReference type="ChEBI" id="CHEBI:57623"/>
        <dbReference type="ChEBI" id="CHEBI:74411"/>
        <dbReference type="ChEBI" id="CHEBI:74415"/>
        <dbReference type="EC" id="2.5.1.75"/>
    </reaction>
</comment>
<comment type="cofactor">
    <cofactor evidence="1">
        <name>Mg(2+)</name>
        <dbReference type="ChEBI" id="CHEBI:18420"/>
    </cofactor>
</comment>
<comment type="subunit">
    <text evidence="1">Monomer.</text>
</comment>
<comment type="similarity">
    <text evidence="1">Belongs to the IPP transferase family.</text>
</comment>
<organism>
    <name type="scientific">Serratia proteamaculans (strain 568)</name>
    <dbReference type="NCBI Taxonomy" id="399741"/>
    <lineage>
        <taxon>Bacteria</taxon>
        <taxon>Pseudomonadati</taxon>
        <taxon>Pseudomonadota</taxon>
        <taxon>Gammaproteobacteria</taxon>
        <taxon>Enterobacterales</taxon>
        <taxon>Yersiniaceae</taxon>
        <taxon>Serratia</taxon>
    </lineage>
</organism>
<accession>A8G8U8</accession>
<keyword id="KW-0067">ATP-binding</keyword>
<keyword id="KW-0460">Magnesium</keyword>
<keyword id="KW-0547">Nucleotide-binding</keyword>
<keyword id="KW-0808">Transferase</keyword>
<keyword id="KW-0819">tRNA processing</keyword>
<name>MIAA_SERP5</name>